<proteinExistence type="evidence at protein level"/>
<keyword id="KW-0025">Alternative splicing</keyword>
<keyword id="KW-0027">Amidation</keyword>
<keyword id="KW-0165">Cleavage on pair of basic residues</keyword>
<keyword id="KW-0968">Cytoplasmic vesicle</keyword>
<keyword id="KW-0372">Hormone</keyword>
<keyword id="KW-1185">Reference proteome</keyword>
<keyword id="KW-0964">Secreted</keyword>
<keyword id="KW-0732">Signal</keyword>
<evidence type="ECO:0000250" key="1"/>
<evidence type="ECO:0000255" key="2"/>
<evidence type="ECO:0000256" key="3">
    <source>
        <dbReference type="SAM" id="MobiDB-lite"/>
    </source>
</evidence>
<evidence type="ECO:0000269" key="4">
    <source>
    </source>
</evidence>
<evidence type="ECO:0000269" key="5">
    <source>
    </source>
</evidence>
<evidence type="ECO:0000269" key="6">
    <source>
    </source>
</evidence>
<evidence type="ECO:0000269" key="7">
    <source>
    </source>
</evidence>
<evidence type="ECO:0000269" key="8">
    <source>
    </source>
</evidence>
<evidence type="ECO:0000269" key="9">
    <source>
    </source>
</evidence>
<evidence type="ECO:0000305" key="10"/>
<protein>
    <recommendedName>
        <fullName>Spexin</fullName>
    </recommendedName>
    <alternativeName>
        <fullName>Liver regeneration-related protein LRRGT00060</fullName>
    </alternativeName>
    <alternativeName>
        <fullName>NPQ</fullName>
    </alternativeName>
    <alternativeName>
        <fullName>Neuropeptide Q</fullName>
    </alternativeName>
    <alternativeName>
        <fullName>Spexin hormone</fullName>
    </alternativeName>
    <component>
        <recommendedName>
            <fullName>Spexin-1</fullName>
        </recommendedName>
    </component>
    <component>
        <recommendedName>
            <fullName>Spexin-2</fullName>
        </recommendedName>
        <alternativeName>
            <fullName>NPQ 53-70</fullName>
        </alternativeName>
    </component>
</protein>
<name>SPXN_RAT</name>
<gene>
    <name type="primary">SPX</name>
</gene>
<comment type="function">
    <text evidence="5 7">Plays a role as a central modulator of cardiovascular and renal function and nociception. Also plays a role in energy metabolism and storage. Inhibits adrenocortical cell proliferation with minor stimulation on corticosteroid release (PubMed:20045034, PubMed:22038051).</text>
</comment>
<comment type="function">
    <molecule>Spexin-1</molecule>
    <text evidence="1 9">Acts as a ligand for galanin receptors GALR2 and GALR3 (By similarity). Intracerebroventricular administration of the peptide induces an increase in arterial blood pressure, a decrease in both heart rate and renal excretion and delayed natriuresis. Intraventricular administration of the peptide induces antinociceptive activity. Intraperitoneal administration of the peptide induces a reduction in food consumption and body weight. Inhibits long chain fatty acid uptake into adipocytes. Also induces contraction of muscarinic-like stomach smooth muscles (PubMed:24550067).</text>
</comment>
<comment type="function">
    <molecule>Spexin-2</molecule>
    <text evidence="7">Intracerebroventricular administration of the peptide induces a decrease in heart rate, but no change in arterial pressure, and an increase in urine flow rate. Intraventricular administration of the peptide induces antinociceptive activity (PubMed:22038051).</text>
</comment>
<comment type="subcellular location">
    <subcellularLocation>
        <location evidence="1">Secreted</location>
    </subcellularLocation>
    <subcellularLocation>
        <location evidence="1">Secreted</location>
        <location evidence="1">Extracellular space</location>
    </subcellularLocation>
    <subcellularLocation>
        <location evidence="1">Cytoplasmic vesicle</location>
        <location evidence="1">Secretory vesicle</location>
    </subcellularLocation>
    <text evidence="1">Secreted via the classical ER/Golgi-dependent pathway into the extracellular medium largely as a full-length protein without the signal peptide, and not as a hydrolyzed and amidated peptide. Localized extracellularly surrounding the villous trophoblastic cells. Detected in the serum (By similarity).</text>
</comment>
<comment type="alternative products">
    <event type="alternative splicing"/>
    <isoform>
        <id>M0R8L2-1</id>
        <name>1</name>
        <sequence type="displayed"/>
    </isoform>
    <isoform>
        <id>M0R8L2-2</id>
        <name>2</name>
        <sequence type="described" ref="VSP_055872"/>
    </isoform>
</comment>
<comment type="tissue specificity">
    <text evidence="4 5 6 8">Widely expressed; predominantly expressed in epithelial cells in the skin, respiratory, digestive, urinary and reproductive systems, retina, adrenal gland and various brain regions. In the adrenal gland, expressed in parenchymal cells of the cortex and in ganglionic cells and intermingled cortical cells of the medulla. Expressed in the type I glomic cells within the carotid body (at protein level). Widely expressed. Strongly expressed in esophagus, liver, pancreas, kidney, brain, hypothalamus, thyroid and ovary. Expressed in the zona glomerulosa (ZG) and zona fasciculata/reticularis (ZF/R) of the adrenal gland. Also expressed in stomach, lung, skeletal muscle, heart, uterus, spleen, adrenal gland and testis. Weakly expressed in small intestine, thymus, urinary bladder and adenohypophysis. In the brain, is expressed in the Barrington's nucleus, with lesser amount in the ventrolateral caudal periaqueductal gray (PAG) and in the mesopontine tegmentum.</text>
</comment>
<comment type="induction">
    <text evidence="5 8 9">Up-regulated by enucleation-induced adrenocortical regeneration (at protein level). Up-regulated by dexamethasone (DX) treatment. Down-regulated by adrenocorticotropic hormone (ACTH) treatment. Up-regulated by hypoxia in the carotid body.</text>
</comment>
<comment type="similarity">
    <text evidence="10">Belongs to the spexin family.</text>
</comment>
<feature type="signal peptide" evidence="2">
    <location>
        <begin position="1"/>
        <end position="26"/>
    </location>
</feature>
<feature type="chain" id="PRO_0000430222" description="Spexin">
    <location>
        <begin position="27"/>
        <end position="116"/>
    </location>
</feature>
<feature type="propeptide" id="PRO_0000430223" evidence="1">
    <location>
        <begin position="27"/>
        <end position="35"/>
    </location>
</feature>
<feature type="peptide" id="PRO_0000430224" description="Spexin-1">
    <location>
        <begin position="36"/>
        <end position="49"/>
    </location>
</feature>
<feature type="propeptide" id="PRO_0000430225" evidence="1">
    <location>
        <begin position="50"/>
        <end position="116"/>
    </location>
</feature>
<feature type="peptide" id="PRO_0000430226" description="Spexin-2">
    <location>
        <begin position="53"/>
        <end position="70"/>
    </location>
</feature>
<feature type="propeptide" id="PRO_0000430227" evidence="1">
    <location>
        <begin position="74"/>
        <end position="116"/>
    </location>
</feature>
<feature type="region of interest" description="Disordered" evidence="3">
    <location>
        <begin position="56"/>
        <end position="75"/>
    </location>
</feature>
<feature type="compositionally biased region" description="Basic and acidic residues" evidence="3">
    <location>
        <begin position="56"/>
        <end position="73"/>
    </location>
</feature>
<feature type="site" description="Cleavage; by prohormone convertase 2" evidence="1">
    <location>
        <begin position="35"/>
        <end position="36"/>
    </location>
</feature>
<feature type="site" description="Cleavage; by prohormone convertase 2" evidence="1">
    <location>
        <begin position="52"/>
        <end position="53"/>
    </location>
</feature>
<feature type="site" description="Cleavage; by prohormone convertase 2" evidence="1">
    <location>
        <begin position="72"/>
        <end position="73"/>
    </location>
</feature>
<feature type="modified residue" description="Glutamine amide" evidence="1">
    <location>
        <position position="49"/>
    </location>
</feature>
<feature type="splice variant" id="VSP_055872" description="In isoform 2." evidence="10">
    <original>RRNPNLQLLTLPEAAALFLASLEKPQKDEGGDFDKSKLLEDRRFYW</original>
    <variation>MNEVVDRKLLMFKTCIFTWELLTSTHAHGLAHLCRMSNHFVHNAGQRKEKEGKGQRGRGGETVKLKEEEEEEEEEEEEEEEEEEEEEEEEEEEEEEEEEAKT</variation>
    <location>
        <begin position="71"/>
        <end position="116"/>
    </location>
</feature>
<organism>
    <name type="scientific">Rattus norvegicus</name>
    <name type="common">Rat</name>
    <dbReference type="NCBI Taxonomy" id="10116"/>
    <lineage>
        <taxon>Eukaryota</taxon>
        <taxon>Metazoa</taxon>
        <taxon>Chordata</taxon>
        <taxon>Craniata</taxon>
        <taxon>Vertebrata</taxon>
        <taxon>Euteleostomi</taxon>
        <taxon>Mammalia</taxon>
        <taxon>Eutheria</taxon>
        <taxon>Euarchontoglires</taxon>
        <taxon>Glires</taxon>
        <taxon>Rodentia</taxon>
        <taxon>Myomorpha</taxon>
        <taxon>Muroidea</taxon>
        <taxon>Muridae</taxon>
        <taxon>Murinae</taxon>
        <taxon>Rattus</taxon>
    </lineage>
</organism>
<accession>M0R8L2</accession>
<accession>Q6TXE0</accession>
<reference key="1">
    <citation type="journal article" date="2004" name="Nature">
        <title>Genome sequence of the Brown Norway rat yields insights into mammalian evolution.</title>
        <authorList>
            <person name="Gibbs R.A."/>
            <person name="Weinstock G.M."/>
            <person name="Metzker M.L."/>
            <person name="Muzny D.M."/>
            <person name="Sodergren E.J."/>
            <person name="Scherer S."/>
            <person name="Scott G."/>
            <person name="Steffen D."/>
            <person name="Worley K.C."/>
            <person name="Burch P.E."/>
            <person name="Okwuonu G."/>
            <person name="Hines S."/>
            <person name="Lewis L."/>
            <person name="Deramo C."/>
            <person name="Delgado O."/>
            <person name="Dugan-Rocha S."/>
            <person name="Miner G."/>
            <person name="Morgan M."/>
            <person name="Hawes A."/>
            <person name="Gill R."/>
            <person name="Holt R.A."/>
            <person name="Adams M.D."/>
            <person name="Amanatides P.G."/>
            <person name="Baden-Tillson H."/>
            <person name="Barnstead M."/>
            <person name="Chin S."/>
            <person name="Evans C.A."/>
            <person name="Ferriera S."/>
            <person name="Fosler C."/>
            <person name="Glodek A."/>
            <person name="Gu Z."/>
            <person name="Jennings D."/>
            <person name="Kraft C.L."/>
            <person name="Nguyen T."/>
            <person name="Pfannkoch C.M."/>
            <person name="Sitter C."/>
            <person name="Sutton G.G."/>
            <person name="Venter J.C."/>
            <person name="Woodage T."/>
            <person name="Smith D."/>
            <person name="Lee H.-M."/>
            <person name="Gustafson E."/>
            <person name="Cahill P."/>
            <person name="Kana A."/>
            <person name="Doucette-Stamm L."/>
            <person name="Weinstock K."/>
            <person name="Fechtel K."/>
            <person name="Weiss R.B."/>
            <person name="Dunn D.M."/>
            <person name="Green E.D."/>
            <person name="Blakesley R.W."/>
            <person name="Bouffard G.G."/>
            <person name="De Jong P.J."/>
            <person name="Osoegawa K."/>
            <person name="Zhu B."/>
            <person name="Marra M."/>
            <person name="Schein J."/>
            <person name="Bosdet I."/>
            <person name="Fjell C."/>
            <person name="Jones S."/>
            <person name="Krzywinski M."/>
            <person name="Mathewson C."/>
            <person name="Siddiqui A."/>
            <person name="Wye N."/>
            <person name="McPherson J."/>
            <person name="Zhao S."/>
            <person name="Fraser C.M."/>
            <person name="Shetty J."/>
            <person name="Shatsman S."/>
            <person name="Geer K."/>
            <person name="Chen Y."/>
            <person name="Abramzon S."/>
            <person name="Nierman W.C."/>
            <person name="Havlak P.H."/>
            <person name="Chen R."/>
            <person name="Durbin K.J."/>
            <person name="Egan A."/>
            <person name="Ren Y."/>
            <person name="Song X.-Z."/>
            <person name="Li B."/>
            <person name="Liu Y."/>
            <person name="Qin X."/>
            <person name="Cawley S."/>
            <person name="Cooney A.J."/>
            <person name="D'Souza L.M."/>
            <person name="Martin K."/>
            <person name="Wu J.Q."/>
            <person name="Gonzalez-Garay M.L."/>
            <person name="Jackson A.R."/>
            <person name="Kalafus K.J."/>
            <person name="McLeod M.P."/>
            <person name="Milosavljevic A."/>
            <person name="Virk D."/>
            <person name="Volkov A."/>
            <person name="Wheeler D.A."/>
            <person name="Zhang Z."/>
            <person name="Bailey J.A."/>
            <person name="Eichler E.E."/>
            <person name="Tuzun E."/>
            <person name="Birney E."/>
            <person name="Mongin E."/>
            <person name="Ureta-Vidal A."/>
            <person name="Woodwark C."/>
            <person name="Zdobnov E."/>
            <person name="Bork P."/>
            <person name="Suyama M."/>
            <person name="Torrents D."/>
            <person name="Alexandersson M."/>
            <person name="Trask B.J."/>
            <person name="Young J.M."/>
            <person name="Huang H."/>
            <person name="Wang H."/>
            <person name="Xing H."/>
            <person name="Daniels S."/>
            <person name="Gietzen D."/>
            <person name="Schmidt J."/>
            <person name="Stevens K."/>
            <person name="Vitt U."/>
            <person name="Wingrove J."/>
            <person name="Camara F."/>
            <person name="Mar Alba M."/>
            <person name="Abril J.F."/>
            <person name="Guigo R."/>
            <person name="Smit A."/>
            <person name="Dubchak I."/>
            <person name="Rubin E.M."/>
            <person name="Couronne O."/>
            <person name="Poliakov A."/>
            <person name="Huebner N."/>
            <person name="Ganten D."/>
            <person name="Goesele C."/>
            <person name="Hummel O."/>
            <person name="Kreitler T."/>
            <person name="Lee Y.-A."/>
            <person name="Monti J."/>
            <person name="Schulz H."/>
            <person name="Zimdahl H."/>
            <person name="Himmelbauer H."/>
            <person name="Lehrach H."/>
            <person name="Jacob H.J."/>
            <person name="Bromberg S."/>
            <person name="Gullings-Handley J."/>
            <person name="Jensen-Seaman M.I."/>
            <person name="Kwitek A.E."/>
            <person name="Lazar J."/>
            <person name="Pasko D."/>
            <person name="Tonellato P.J."/>
            <person name="Twigger S."/>
            <person name="Ponting C.P."/>
            <person name="Duarte J.M."/>
            <person name="Rice S."/>
            <person name="Goodstadt L."/>
            <person name="Beatson S.A."/>
            <person name="Emes R.D."/>
            <person name="Winter E.E."/>
            <person name="Webber C."/>
            <person name="Brandt P."/>
            <person name="Nyakatura G."/>
            <person name="Adetobi M."/>
            <person name="Chiaromonte F."/>
            <person name="Elnitski L."/>
            <person name="Eswara P."/>
            <person name="Hardison R.C."/>
            <person name="Hou M."/>
            <person name="Kolbe D."/>
            <person name="Makova K."/>
            <person name="Miller W."/>
            <person name="Nekrutenko A."/>
            <person name="Riemer C."/>
            <person name="Schwartz S."/>
            <person name="Taylor J."/>
            <person name="Yang S."/>
            <person name="Zhang Y."/>
            <person name="Lindpaintner K."/>
            <person name="Andrews T.D."/>
            <person name="Caccamo M."/>
            <person name="Clamp M."/>
            <person name="Clarke L."/>
            <person name="Curwen V."/>
            <person name="Durbin R.M."/>
            <person name="Eyras E."/>
            <person name="Searle S.M."/>
            <person name="Cooper G.M."/>
            <person name="Batzoglou S."/>
            <person name="Brudno M."/>
            <person name="Sidow A."/>
            <person name="Stone E.A."/>
            <person name="Payseur B.A."/>
            <person name="Bourque G."/>
            <person name="Lopez-Otin C."/>
            <person name="Puente X.S."/>
            <person name="Chakrabarti K."/>
            <person name="Chatterji S."/>
            <person name="Dewey C."/>
            <person name="Pachter L."/>
            <person name="Bray N."/>
            <person name="Yap V.B."/>
            <person name="Caspi A."/>
            <person name="Tesler G."/>
            <person name="Pevzner P.A."/>
            <person name="Haussler D."/>
            <person name="Roskin K.M."/>
            <person name="Baertsch R."/>
            <person name="Clawson H."/>
            <person name="Furey T.S."/>
            <person name="Hinrichs A.S."/>
            <person name="Karolchik D."/>
            <person name="Kent W.J."/>
            <person name="Rosenbloom K.R."/>
            <person name="Trumbower H."/>
            <person name="Weirauch M."/>
            <person name="Cooper D.N."/>
            <person name="Stenson P.D."/>
            <person name="Ma B."/>
            <person name="Brent M."/>
            <person name="Arumugam M."/>
            <person name="Shteynberg D."/>
            <person name="Copley R.R."/>
            <person name="Taylor M.S."/>
            <person name="Riethman H."/>
            <person name="Mudunuri U."/>
            <person name="Peterson J."/>
            <person name="Guyer M."/>
            <person name="Felsenfeld A."/>
            <person name="Old S."/>
            <person name="Mockrin S."/>
            <person name="Collins F.S."/>
        </authorList>
    </citation>
    <scope>NUCLEOTIDE SEQUENCE [LARGE SCALE GENOMIC DNA]</scope>
    <source>
        <strain>Brown Norway</strain>
    </source>
</reference>
<reference key="2">
    <citation type="submission" date="2003-09" db="EMBL/GenBank/DDBJ databases">
        <title>Liver regeneration after PH.</title>
        <authorList>
            <person name="Xu C.S."/>
            <person name="Chang C.F."/>
            <person name="Han H.P."/>
            <person name="Wang G.P."/>
            <person name="Chai L.Q."/>
            <person name="Yuan J.Y."/>
            <person name="Yang K.J."/>
            <person name="Zhao L.F."/>
            <person name="Ma H."/>
            <person name="Wang L."/>
            <person name="Wang S.F."/>
            <person name="Xing X.K."/>
            <person name="Shen G.M."/>
            <person name="Shi J.B."/>
            <person name="Rahman S."/>
            <person name="Wang Q.N."/>
            <person name="Zhang J.B."/>
        </authorList>
    </citation>
    <scope>NUCLEOTIDE SEQUENCE (ISOFORM 2)</scope>
    <source>
        <strain>Sprague-Dawley</strain>
        <tissue>Liver</tissue>
    </source>
</reference>
<reference key="3">
    <citation type="journal article" date="2009" name="PLoS Comput. Biol.">
        <title>Evolutionary sequence modeling for discovery of peptide hormones.</title>
        <authorList>
            <person name="Sonmez K."/>
            <person name="Zaveri N.T."/>
            <person name="Kerman I.A."/>
            <person name="Burke S."/>
            <person name="Neal C.R."/>
            <person name="Xie X."/>
            <person name="Watson S.J."/>
            <person name="Toll L."/>
        </authorList>
    </citation>
    <scope>TISSUE SPECIFICITY</scope>
</reference>
<reference key="4">
    <citation type="journal article" date="2010" name="J. Histochem. Cytochem.">
        <title>Spexin expression in normal rat tissues.</title>
        <authorList>
            <person name="Porzionato A."/>
            <person name="Rucinski M."/>
            <person name="Macchi V."/>
            <person name="Stecco C."/>
            <person name="Malendowicz L.K."/>
            <person name="De Caro R."/>
        </authorList>
    </citation>
    <scope>SUBCELLULAR LOCATION</scope>
    <scope>TISSUE SPECIFICITY</scope>
</reference>
<reference key="5">
    <citation type="journal article" date="2010" name="Peptides">
        <title>Expression of the spexin gene in the rat adrenal gland and evidences suggesting that spexin inhibits adrenocortical cell proliferation.</title>
        <authorList>
            <person name="Rucinski M."/>
            <person name="Porzionato A."/>
            <person name="Ziolkowska A."/>
            <person name="Szyszka M."/>
            <person name="Macchi V."/>
            <person name="De Caro R."/>
            <person name="Malendowicz L.K."/>
        </authorList>
    </citation>
    <scope>FUNCTION</scope>
    <scope>INDUCTION</scope>
    <scope>TISSUE SPECIFICITY</scope>
</reference>
<reference key="6">
    <citation type="journal article" date="2012" name="Adv. Exp. Med. Biol.">
        <title>Spexin is expressed in the carotid body and is upregulated by postnatal hyperoxia exposure.</title>
        <authorList>
            <person name="Porzionato A."/>
            <person name="Rucinski M."/>
            <person name="Macchi V."/>
            <person name="Stecco C."/>
            <person name="Sarasin G."/>
            <person name="Sfriso M.M."/>
            <person name="Di Giulio C."/>
            <person name="Malendowicz L.K."/>
            <person name="De Caro R."/>
        </authorList>
    </citation>
    <scope>INDUCTION</scope>
    <scope>TISSUE SPECIFICITY</scope>
</reference>
<reference key="7">
    <citation type="journal article" date="2012" name="FASEB J.">
        <title>Peptides derived from the prohormone proNPQ/spexin are potent central modulators of cardiovascular and renal function and nociception.</title>
        <authorList>
            <person name="Toll L."/>
            <person name="Khroyan T.V."/>
            <person name="Sonmez K."/>
            <person name="Ozawa A."/>
            <person name="Lindberg I."/>
            <person name="McLaughlin J.P."/>
            <person name="Eans S.O."/>
            <person name="Shahien A.A."/>
            <person name="Kapusta D.R."/>
        </authorList>
    </citation>
    <scope>FUNCTION (SPEXIN AND SPEXIN-2)</scope>
</reference>
<reference key="8">
    <citation type="journal article" date="2014" name="Obesity">
        <title>Spexin is a novel human peptide that reduces adipocyte uptake of long chain fatty acids and causes weight loss in rodents with diet-induced obesity.</title>
        <authorList>
            <person name="Walewski J.L."/>
            <person name="Ge F."/>
            <person name="Lobdell H. IV"/>
            <person name="Levin N."/>
            <person name="Schwartz G.J."/>
            <person name="Vasselli J.R."/>
            <person name="Pomp A."/>
            <person name="Dakin G."/>
            <person name="Berk P.D."/>
        </authorList>
    </citation>
    <scope>FUNCTION (SPEXIN-1)</scope>
    <scope>INDUCTION</scope>
</reference>
<dbReference type="EMBL" id="AABR06034154">
    <property type="status" value="NOT_ANNOTATED_CDS"/>
    <property type="molecule type" value="Genomic_DNA"/>
</dbReference>
<dbReference type="EMBL" id="AABR06034155">
    <property type="status" value="NOT_ANNOTATED_CDS"/>
    <property type="molecule type" value="Genomic_DNA"/>
</dbReference>
<dbReference type="EMBL" id="AABR06034156">
    <property type="status" value="NOT_ANNOTATED_CDS"/>
    <property type="molecule type" value="Genomic_DNA"/>
</dbReference>
<dbReference type="EMBL" id="AABR06034157">
    <property type="status" value="NOT_ANNOTATED_CDS"/>
    <property type="molecule type" value="Genomic_DNA"/>
</dbReference>
<dbReference type="EMBL" id="AABR06034158">
    <property type="status" value="NOT_ANNOTATED_CDS"/>
    <property type="molecule type" value="Genomic_DNA"/>
</dbReference>
<dbReference type="EMBL" id="AY383715">
    <property type="protein sequence ID" value="AAQ96273.1"/>
    <property type="molecule type" value="mRNA"/>
</dbReference>
<dbReference type="RefSeq" id="NP_001077402.2">
    <molecule id="M0R8L2-1"/>
    <property type="nucleotide sequence ID" value="NM_001083933.3"/>
</dbReference>
<dbReference type="SMR" id="M0R8L2"/>
<dbReference type="FunCoup" id="M0R8L2">
    <property type="interactions" value="9"/>
</dbReference>
<dbReference type="STRING" id="10116.ENSRNOP00000068862"/>
<dbReference type="PaxDb" id="10116-ENSRNOP00000037793"/>
<dbReference type="Ensembl" id="ENSRNOT00000087378.2">
    <molecule id="M0R8L2-1"/>
    <property type="protein sequence ID" value="ENSRNOP00000071461.1"/>
    <property type="gene ID" value="ENSRNOG00000053700.2"/>
</dbReference>
<dbReference type="GeneID" id="691138"/>
<dbReference type="KEGG" id="rno:691138"/>
<dbReference type="UCSC" id="RGD:1587448">
    <property type="organism name" value="rat"/>
</dbReference>
<dbReference type="AGR" id="RGD:1587448"/>
<dbReference type="CTD" id="80763"/>
<dbReference type="RGD" id="1587448">
    <property type="gene designation" value="Spx"/>
</dbReference>
<dbReference type="GeneTree" id="ENSGT00390000012501"/>
<dbReference type="HOGENOM" id="CLU_169090_0_0_1"/>
<dbReference type="InParanoid" id="M0R8L2"/>
<dbReference type="OMA" id="DEVYIQE"/>
<dbReference type="OrthoDB" id="9946068at2759"/>
<dbReference type="TreeFam" id="TF333402"/>
<dbReference type="PRO" id="PR:M0R8L2"/>
<dbReference type="Proteomes" id="UP000002494">
    <property type="component" value="Chromosome 4"/>
</dbReference>
<dbReference type="Bgee" id="ENSRNOG00000053700">
    <property type="expression patterns" value="Expressed in cerebellum and 2 other cell types or tissues"/>
</dbReference>
<dbReference type="ExpressionAtlas" id="M0R8L2">
    <property type="expression patterns" value="baseline and differential"/>
</dbReference>
<dbReference type="GO" id="GO:0005737">
    <property type="term" value="C:cytoplasm"/>
    <property type="evidence" value="ECO:0000314"/>
    <property type="project" value="UniProtKB"/>
</dbReference>
<dbReference type="GO" id="GO:0031045">
    <property type="term" value="C:dense core granule"/>
    <property type="evidence" value="ECO:0000250"/>
    <property type="project" value="UniProtKB"/>
</dbReference>
<dbReference type="GO" id="GO:0005615">
    <property type="term" value="C:extracellular space"/>
    <property type="evidence" value="ECO:0000250"/>
    <property type="project" value="UniProtKB"/>
</dbReference>
<dbReference type="GO" id="GO:0030133">
    <property type="term" value="C:transport vesicle"/>
    <property type="evidence" value="ECO:0007669"/>
    <property type="project" value="UniProtKB-SubCell"/>
</dbReference>
<dbReference type="GO" id="GO:0005184">
    <property type="term" value="F:neuropeptide hormone activity"/>
    <property type="evidence" value="ECO:0000250"/>
    <property type="project" value="UniProtKB"/>
</dbReference>
<dbReference type="GO" id="GO:0031765">
    <property type="term" value="F:type 2 galanin receptor binding"/>
    <property type="evidence" value="ECO:0000250"/>
    <property type="project" value="UniProtKB"/>
</dbReference>
<dbReference type="GO" id="GO:0031766">
    <property type="term" value="F:type 3 galanin receptor binding"/>
    <property type="evidence" value="ECO:0000250"/>
    <property type="project" value="UniProtKB"/>
</dbReference>
<dbReference type="GO" id="GO:1904306">
    <property type="term" value="P:positive regulation of gastro-intestinal system smooth muscle contraction"/>
    <property type="evidence" value="ECO:0000250"/>
    <property type="project" value="UniProtKB"/>
</dbReference>
<dbReference type="GO" id="GO:0045944">
    <property type="term" value="P:positive regulation of transcription by RNA polymerase II"/>
    <property type="evidence" value="ECO:0000250"/>
    <property type="project" value="UniProtKB"/>
</dbReference>
<dbReference type="InterPro" id="IPR028126">
    <property type="entry name" value="Spexin"/>
</dbReference>
<dbReference type="PANTHER" id="PTHR28590">
    <property type="entry name" value="SPEXIN"/>
    <property type="match status" value="1"/>
</dbReference>
<dbReference type="PANTHER" id="PTHR28590:SF1">
    <property type="entry name" value="SPEXIN"/>
    <property type="match status" value="1"/>
</dbReference>
<dbReference type="Pfam" id="PF15171">
    <property type="entry name" value="Spexin"/>
    <property type="match status" value="1"/>
</dbReference>
<sequence length="116" mass="13083">MKGPSILAVAALALLLVLSVLENSSGAPQRLSEKRNWTPQAMLYLKGAQGHRFISDQSRRKELADRPPPERRNPNLQLLTLPEAAALFLASLEKPQKDEGGDFDKSKLLEDRRFYW</sequence>